<name>IF1C_PHAAO</name>
<gene>
    <name evidence="1" type="primary">infA</name>
</gene>
<protein>
    <recommendedName>
        <fullName evidence="1">Translation initiation factor IF-1, chloroplastic</fullName>
    </recommendedName>
</protein>
<comment type="function">
    <text evidence="1">One of the essential components for the initiation of protein synthesis. Stabilizes the binding of IF-2 and IF-3 on the 30S subunit to which N-formylmethionyl-tRNA(fMet) subsequently binds. Helps modulate mRNA selection, yielding the 30S pre-initiation complex (PIC). Upon addition of the 50S ribosomal subunit IF-1, IF-2 and IF-3 are released leaving the mature 70S translation initiation complex.</text>
</comment>
<comment type="subunit">
    <text evidence="1">Component of the 30S ribosomal translation pre-initiation complex which assembles on the 30S ribosome in the order IF-2 and IF-3, IF-1 and N-formylmethionyl-tRNA(fMet); mRNA recruitment can occur at any time during PIC assembly.</text>
</comment>
<comment type="subcellular location">
    <subcellularLocation>
        <location evidence="1">Plastid</location>
        <location evidence="1">Chloroplast</location>
    </subcellularLocation>
</comment>
<comment type="similarity">
    <text evidence="1">Belongs to the IF-1 family.</text>
</comment>
<keyword id="KW-0150">Chloroplast</keyword>
<keyword id="KW-0396">Initiation factor</keyword>
<keyword id="KW-0934">Plastid</keyword>
<keyword id="KW-0648">Protein biosynthesis</keyword>
<keyword id="KW-0694">RNA-binding</keyword>
<keyword id="KW-0699">rRNA-binding</keyword>
<evidence type="ECO:0000255" key="1">
    <source>
        <dbReference type="HAMAP-Rule" id="MF_00075"/>
    </source>
</evidence>
<dbReference type="EMBL" id="AY916449">
    <property type="protein sequence ID" value="AAW82534.1"/>
    <property type="molecule type" value="Genomic_DNA"/>
</dbReference>
<dbReference type="RefSeq" id="YP_358616.1">
    <property type="nucleotide sequence ID" value="NC_007499.1"/>
</dbReference>
<dbReference type="SMR" id="Q3BAK2"/>
<dbReference type="GeneID" id="3741715"/>
<dbReference type="GO" id="GO:0009507">
    <property type="term" value="C:chloroplast"/>
    <property type="evidence" value="ECO:0007669"/>
    <property type="project" value="UniProtKB-SubCell"/>
</dbReference>
<dbReference type="GO" id="GO:0005829">
    <property type="term" value="C:cytosol"/>
    <property type="evidence" value="ECO:0007669"/>
    <property type="project" value="TreeGrafter"/>
</dbReference>
<dbReference type="GO" id="GO:0043022">
    <property type="term" value="F:ribosome binding"/>
    <property type="evidence" value="ECO:0007669"/>
    <property type="project" value="UniProtKB-UniRule"/>
</dbReference>
<dbReference type="GO" id="GO:0019843">
    <property type="term" value="F:rRNA binding"/>
    <property type="evidence" value="ECO:0007669"/>
    <property type="project" value="UniProtKB-UniRule"/>
</dbReference>
<dbReference type="GO" id="GO:0003743">
    <property type="term" value="F:translation initiation factor activity"/>
    <property type="evidence" value="ECO:0007669"/>
    <property type="project" value="UniProtKB-UniRule"/>
</dbReference>
<dbReference type="CDD" id="cd04451">
    <property type="entry name" value="S1_IF1"/>
    <property type="match status" value="1"/>
</dbReference>
<dbReference type="FunFam" id="2.40.50.140:FF:000019">
    <property type="entry name" value="Translation initiation factor IF-1, chloroplastic"/>
    <property type="match status" value="1"/>
</dbReference>
<dbReference type="Gene3D" id="2.40.50.140">
    <property type="entry name" value="Nucleic acid-binding proteins"/>
    <property type="match status" value="1"/>
</dbReference>
<dbReference type="HAMAP" id="MF_00075">
    <property type="entry name" value="IF_1"/>
    <property type="match status" value="1"/>
</dbReference>
<dbReference type="InterPro" id="IPR012340">
    <property type="entry name" value="NA-bd_OB-fold"/>
</dbReference>
<dbReference type="InterPro" id="IPR006196">
    <property type="entry name" value="RNA-binding_domain_S1_IF1"/>
</dbReference>
<dbReference type="InterPro" id="IPR004368">
    <property type="entry name" value="TIF_IF1"/>
</dbReference>
<dbReference type="NCBIfam" id="TIGR00008">
    <property type="entry name" value="infA"/>
    <property type="match status" value="1"/>
</dbReference>
<dbReference type="PANTHER" id="PTHR33370">
    <property type="entry name" value="TRANSLATION INITIATION FACTOR IF-1, CHLOROPLASTIC"/>
    <property type="match status" value="1"/>
</dbReference>
<dbReference type="PANTHER" id="PTHR33370:SF1">
    <property type="entry name" value="TRANSLATION INITIATION FACTOR IF-1, CHLOROPLASTIC"/>
    <property type="match status" value="1"/>
</dbReference>
<dbReference type="Pfam" id="PF01176">
    <property type="entry name" value="eIF-1a"/>
    <property type="match status" value="1"/>
</dbReference>
<dbReference type="SUPFAM" id="SSF50249">
    <property type="entry name" value="Nucleic acid-binding proteins"/>
    <property type="match status" value="1"/>
</dbReference>
<dbReference type="PROSITE" id="PS50832">
    <property type="entry name" value="S1_IF1_TYPE"/>
    <property type="match status" value="1"/>
</dbReference>
<reference key="1">
    <citation type="journal article" date="2006" name="Mol. Biol. Evol.">
        <title>The chloroplast genome of Phalaenopsis aphrodite (Orchidaceae): comparative analysis of evolutionary rate with that of grasses and its phylogenetic implications.</title>
        <authorList>
            <person name="Chang C.-C."/>
            <person name="Lin H.-C."/>
            <person name="Lin I.-P."/>
            <person name="Chow T.-Y."/>
            <person name="Chen H.-H."/>
            <person name="Chen W.-H."/>
            <person name="Cheng C.-H."/>
            <person name="Lin C.-Y."/>
            <person name="Liu S.-M."/>
            <person name="Chang C.-C."/>
            <person name="Chaw S.-M."/>
        </authorList>
    </citation>
    <scope>NUCLEOTIDE SEQUENCE [LARGE SCALE GENOMIC DNA]</scope>
    <source>
        <strain>cv. Taisugar TS-97</strain>
    </source>
</reference>
<proteinExistence type="inferred from homology"/>
<accession>Q3BAK2</accession>
<sequence length="77" mass="9151">MKEQKLIHEGLITESLPNGMFRVRLDNEDLILGYISGRIRRSFIRILPGDRVKIEMSRYDSTRGRIIYRLRKKDSND</sequence>
<feature type="chain" id="PRO_0000226951" description="Translation initiation factor IF-1, chloroplastic">
    <location>
        <begin position="1"/>
        <end position="77"/>
    </location>
</feature>
<feature type="domain" description="S1-like" evidence="1">
    <location>
        <begin position="1"/>
        <end position="71"/>
    </location>
</feature>
<geneLocation type="chloroplast"/>
<organism>
    <name type="scientific">Phalaenopsis aphrodite subsp. formosana</name>
    <name type="common">Moth orchid</name>
    <dbReference type="NCBI Taxonomy" id="308872"/>
    <lineage>
        <taxon>Eukaryota</taxon>
        <taxon>Viridiplantae</taxon>
        <taxon>Streptophyta</taxon>
        <taxon>Embryophyta</taxon>
        <taxon>Tracheophyta</taxon>
        <taxon>Spermatophyta</taxon>
        <taxon>Magnoliopsida</taxon>
        <taxon>Liliopsida</taxon>
        <taxon>Asparagales</taxon>
        <taxon>Orchidaceae</taxon>
        <taxon>Epidendroideae</taxon>
        <taxon>Vandeae</taxon>
        <taxon>Aeridinae</taxon>
        <taxon>Phalaenopsis</taxon>
    </lineage>
</organism>